<comment type="function">
    <text evidence="1">Catalyzes the attachment of proline to tRNA(Pro) in a two-step reaction: proline is first activated by ATP to form Pro-AMP and then transferred to the acceptor end of tRNA(Pro). As ProRS can inadvertently accommodate and process non-cognate amino acids such as alanine and cysteine, to avoid such errors it has two additional distinct editing activities against alanine. One activity is designated as 'pretransfer' editing and involves the tRNA(Pro)-independent hydrolysis of activated Ala-AMP. The other activity is designated 'posttransfer' editing and involves deacylation of mischarged Ala-tRNA(Pro). The misacylated Cys-tRNA(Pro) is not edited by ProRS.</text>
</comment>
<comment type="catalytic activity">
    <reaction evidence="1">
        <text>tRNA(Pro) + L-proline + ATP = L-prolyl-tRNA(Pro) + AMP + diphosphate</text>
        <dbReference type="Rhea" id="RHEA:14305"/>
        <dbReference type="Rhea" id="RHEA-COMP:9700"/>
        <dbReference type="Rhea" id="RHEA-COMP:9702"/>
        <dbReference type="ChEBI" id="CHEBI:30616"/>
        <dbReference type="ChEBI" id="CHEBI:33019"/>
        <dbReference type="ChEBI" id="CHEBI:60039"/>
        <dbReference type="ChEBI" id="CHEBI:78442"/>
        <dbReference type="ChEBI" id="CHEBI:78532"/>
        <dbReference type="ChEBI" id="CHEBI:456215"/>
        <dbReference type="EC" id="6.1.1.15"/>
    </reaction>
</comment>
<comment type="subunit">
    <text evidence="1">Homodimer.</text>
</comment>
<comment type="subcellular location">
    <subcellularLocation>
        <location evidence="1">Cytoplasm</location>
    </subcellularLocation>
</comment>
<comment type="domain">
    <text evidence="1">Consists of three domains: the N-terminal catalytic domain, the editing domain and the C-terminal anticodon-binding domain.</text>
</comment>
<comment type="similarity">
    <text evidence="1">Belongs to the class-II aminoacyl-tRNA synthetase family. ProS type 1 subfamily.</text>
</comment>
<keyword id="KW-0030">Aminoacyl-tRNA synthetase</keyword>
<keyword id="KW-0067">ATP-binding</keyword>
<keyword id="KW-0963">Cytoplasm</keyword>
<keyword id="KW-0436">Ligase</keyword>
<keyword id="KW-0547">Nucleotide-binding</keyword>
<keyword id="KW-0648">Protein biosynthesis</keyword>
<accession>Q5PD80</accession>
<protein>
    <recommendedName>
        <fullName evidence="1">Proline--tRNA ligase</fullName>
        <ecNumber evidence="1">6.1.1.15</ecNumber>
    </recommendedName>
    <alternativeName>
        <fullName evidence="1">Prolyl-tRNA synthetase</fullName>
        <shortName evidence="1">ProRS</shortName>
    </alternativeName>
</protein>
<name>SYP_SALPA</name>
<dbReference type="EC" id="6.1.1.15" evidence="1"/>
<dbReference type="EMBL" id="CP000026">
    <property type="protein sequence ID" value="AAV76278.1"/>
    <property type="molecule type" value="Genomic_DNA"/>
</dbReference>
<dbReference type="RefSeq" id="WP_001260683.1">
    <property type="nucleotide sequence ID" value="NC_006511.1"/>
</dbReference>
<dbReference type="SMR" id="Q5PD80"/>
<dbReference type="KEGG" id="spt:SPA0249"/>
<dbReference type="HOGENOM" id="CLU_016739_0_0_6"/>
<dbReference type="Proteomes" id="UP000008185">
    <property type="component" value="Chromosome"/>
</dbReference>
<dbReference type="GO" id="GO:0005829">
    <property type="term" value="C:cytosol"/>
    <property type="evidence" value="ECO:0007669"/>
    <property type="project" value="TreeGrafter"/>
</dbReference>
<dbReference type="GO" id="GO:0002161">
    <property type="term" value="F:aminoacyl-tRNA deacylase activity"/>
    <property type="evidence" value="ECO:0007669"/>
    <property type="project" value="InterPro"/>
</dbReference>
<dbReference type="GO" id="GO:0005524">
    <property type="term" value="F:ATP binding"/>
    <property type="evidence" value="ECO:0007669"/>
    <property type="project" value="UniProtKB-UniRule"/>
</dbReference>
<dbReference type="GO" id="GO:0004827">
    <property type="term" value="F:proline-tRNA ligase activity"/>
    <property type="evidence" value="ECO:0007669"/>
    <property type="project" value="UniProtKB-UniRule"/>
</dbReference>
<dbReference type="GO" id="GO:0006433">
    <property type="term" value="P:prolyl-tRNA aminoacylation"/>
    <property type="evidence" value="ECO:0007669"/>
    <property type="project" value="UniProtKB-UniRule"/>
</dbReference>
<dbReference type="CDD" id="cd04334">
    <property type="entry name" value="ProRS-INS"/>
    <property type="match status" value="1"/>
</dbReference>
<dbReference type="CDD" id="cd00861">
    <property type="entry name" value="ProRS_anticodon_short"/>
    <property type="match status" value="1"/>
</dbReference>
<dbReference type="CDD" id="cd00779">
    <property type="entry name" value="ProRS_core_prok"/>
    <property type="match status" value="1"/>
</dbReference>
<dbReference type="FunFam" id="3.30.930.10:FF:000012">
    <property type="entry name" value="Proline--tRNA ligase"/>
    <property type="match status" value="1"/>
</dbReference>
<dbReference type="FunFam" id="3.30.930.10:FF:000097">
    <property type="entry name" value="Proline--tRNA ligase"/>
    <property type="match status" value="1"/>
</dbReference>
<dbReference type="FunFam" id="3.40.50.800:FF:000006">
    <property type="entry name" value="Proline--tRNA ligase"/>
    <property type="match status" value="1"/>
</dbReference>
<dbReference type="FunFam" id="3.90.960.10:FF:000001">
    <property type="entry name" value="Proline--tRNA ligase"/>
    <property type="match status" value="1"/>
</dbReference>
<dbReference type="Gene3D" id="3.40.50.800">
    <property type="entry name" value="Anticodon-binding domain"/>
    <property type="match status" value="1"/>
</dbReference>
<dbReference type="Gene3D" id="3.30.930.10">
    <property type="entry name" value="Bira Bifunctional Protein, Domain 2"/>
    <property type="match status" value="2"/>
</dbReference>
<dbReference type="Gene3D" id="3.90.960.10">
    <property type="entry name" value="YbaK/aminoacyl-tRNA synthetase-associated domain"/>
    <property type="match status" value="1"/>
</dbReference>
<dbReference type="HAMAP" id="MF_01569">
    <property type="entry name" value="Pro_tRNA_synth_type1"/>
    <property type="match status" value="1"/>
</dbReference>
<dbReference type="InterPro" id="IPR002314">
    <property type="entry name" value="aa-tRNA-synt_IIb"/>
</dbReference>
<dbReference type="InterPro" id="IPR006195">
    <property type="entry name" value="aa-tRNA-synth_II"/>
</dbReference>
<dbReference type="InterPro" id="IPR045864">
    <property type="entry name" value="aa-tRNA-synth_II/BPL/LPL"/>
</dbReference>
<dbReference type="InterPro" id="IPR004154">
    <property type="entry name" value="Anticodon-bd"/>
</dbReference>
<dbReference type="InterPro" id="IPR036621">
    <property type="entry name" value="Anticodon-bd_dom_sf"/>
</dbReference>
<dbReference type="InterPro" id="IPR002316">
    <property type="entry name" value="Pro-tRNA-ligase_IIa"/>
</dbReference>
<dbReference type="InterPro" id="IPR004500">
    <property type="entry name" value="Pro-tRNA-synth_IIa_bac-type"/>
</dbReference>
<dbReference type="InterPro" id="IPR023717">
    <property type="entry name" value="Pro-tRNA-Synthase_IIa_type1"/>
</dbReference>
<dbReference type="InterPro" id="IPR050062">
    <property type="entry name" value="Pro-tRNA_synthetase"/>
</dbReference>
<dbReference type="InterPro" id="IPR044140">
    <property type="entry name" value="ProRS_anticodon_short"/>
</dbReference>
<dbReference type="InterPro" id="IPR033730">
    <property type="entry name" value="ProRS_core_prok"/>
</dbReference>
<dbReference type="InterPro" id="IPR036754">
    <property type="entry name" value="YbaK/aa-tRNA-synt-asso_dom_sf"/>
</dbReference>
<dbReference type="InterPro" id="IPR007214">
    <property type="entry name" value="YbaK/aa-tRNA-synth-assoc-dom"/>
</dbReference>
<dbReference type="NCBIfam" id="NF006625">
    <property type="entry name" value="PRK09194.1"/>
    <property type="match status" value="1"/>
</dbReference>
<dbReference type="NCBIfam" id="TIGR00409">
    <property type="entry name" value="proS_fam_II"/>
    <property type="match status" value="1"/>
</dbReference>
<dbReference type="PANTHER" id="PTHR42753">
    <property type="entry name" value="MITOCHONDRIAL RIBOSOME PROTEIN L39/PROLYL-TRNA LIGASE FAMILY MEMBER"/>
    <property type="match status" value="1"/>
</dbReference>
<dbReference type="PANTHER" id="PTHR42753:SF2">
    <property type="entry name" value="PROLINE--TRNA LIGASE"/>
    <property type="match status" value="1"/>
</dbReference>
<dbReference type="Pfam" id="PF03129">
    <property type="entry name" value="HGTP_anticodon"/>
    <property type="match status" value="1"/>
</dbReference>
<dbReference type="Pfam" id="PF00587">
    <property type="entry name" value="tRNA-synt_2b"/>
    <property type="match status" value="1"/>
</dbReference>
<dbReference type="Pfam" id="PF04073">
    <property type="entry name" value="tRNA_edit"/>
    <property type="match status" value="1"/>
</dbReference>
<dbReference type="PIRSF" id="PIRSF001535">
    <property type="entry name" value="ProRS_1"/>
    <property type="match status" value="1"/>
</dbReference>
<dbReference type="PRINTS" id="PR01046">
    <property type="entry name" value="TRNASYNTHPRO"/>
</dbReference>
<dbReference type="SUPFAM" id="SSF52954">
    <property type="entry name" value="Class II aaRS ABD-related"/>
    <property type="match status" value="1"/>
</dbReference>
<dbReference type="SUPFAM" id="SSF55681">
    <property type="entry name" value="Class II aaRS and biotin synthetases"/>
    <property type="match status" value="1"/>
</dbReference>
<dbReference type="SUPFAM" id="SSF55826">
    <property type="entry name" value="YbaK/ProRS associated domain"/>
    <property type="match status" value="1"/>
</dbReference>
<dbReference type="PROSITE" id="PS50862">
    <property type="entry name" value="AA_TRNA_LIGASE_II"/>
    <property type="match status" value="1"/>
</dbReference>
<evidence type="ECO:0000255" key="1">
    <source>
        <dbReference type="HAMAP-Rule" id="MF_01569"/>
    </source>
</evidence>
<organism>
    <name type="scientific">Salmonella paratyphi A (strain ATCC 9150 / SARB42)</name>
    <dbReference type="NCBI Taxonomy" id="295319"/>
    <lineage>
        <taxon>Bacteria</taxon>
        <taxon>Pseudomonadati</taxon>
        <taxon>Pseudomonadota</taxon>
        <taxon>Gammaproteobacteria</taxon>
        <taxon>Enterobacterales</taxon>
        <taxon>Enterobacteriaceae</taxon>
        <taxon>Salmonella</taxon>
    </lineage>
</organism>
<gene>
    <name evidence="1" type="primary">proS</name>
    <name type="ordered locus">SPA0249</name>
</gene>
<feature type="chain" id="PRO_0000248759" description="Proline--tRNA ligase">
    <location>
        <begin position="1"/>
        <end position="572"/>
    </location>
</feature>
<reference key="1">
    <citation type="journal article" date="2004" name="Nat. Genet.">
        <title>Comparison of genome degradation in Paratyphi A and Typhi, human-restricted serovars of Salmonella enterica that cause typhoid.</title>
        <authorList>
            <person name="McClelland M."/>
            <person name="Sanderson K.E."/>
            <person name="Clifton S.W."/>
            <person name="Latreille P."/>
            <person name="Porwollik S."/>
            <person name="Sabo A."/>
            <person name="Meyer R."/>
            <person name="Bieri T."/>
            <person name="Ozersky P."/>
            <person name="McLellan M."/>
            <person name="Harkins C.R."/>
            <person name="Wang C."/>
            <person name="Nguyen C."/>
            <person name="Berghoff A."/>
            <person name="Elliott G."/>
            <person name="Kohlberg S."/>
            <person name="Strong C."/>
            <person name="Du F."/>
            <person name="Carter J."/>
            <person name="Kremizki C."/>
            <person name="Layman D."/>
            <person name="Leonard S."/>
            <person name="Sun H."/>
            <person name="Fulton L."/>
            <person name="Nash W."/>
            <person name="Miner T."/>
            <person name="Minx P."/>
            <person name="Delehaunty K."/>
            <person name="Fronick C."/>
            <person name="Magrini V."/>
            <person name="Nhan M."/>
            <person name="Warren W."/>
            <person name="Florea L."/>
            <person name="Spieth J."/>
            <person name="Wilson R.K."/>
        </authorList>
    </citation>
    <scope>NUCLEOTIDE SEQUENCE [LARGE SCALE GENOMIC DNA]</scope>
    <source>
        <strain>ATCC 9150 / SARB42</strain>
    </source>
</reference>
<proteinExistence type="inferred from homology"/>
<sequence>MRTSQYLLSTLKETPADAEVISHQLMLRAGMIRKLASGLYTWLPTGLRVLKKVENIVREEMNNAGAIEVSMPVVQPADLWQESGRWEQYGPELLRFVDRGERPFVLGPTHEEVITDLVRNELSSYKQLPLNFFQIQTKFRDEVRPRFGVMRSREFLMKDAYSFHTSQESLQETYDAMYAAYSRIFSRMGLDFRAVQADTGSIGGNASHEFQVLAQSGEDDIVFSDVSDYAANIELAEAIAPQTPRAAATQEMTLVDTPNAKTIAELVEQFNLPIEKTVKTLLVKAVKDSKSPLVALLVRGDHELNEVKAEKLPHVASPLTFATEEEIRAVINAGPGSLGPVNMPIPVIIDRTVAAMSDFAAGANIDGKHYFGINWDRDVATPVVADIRNVVAGDPSPDGQGTLLIKRGIEVGHIFQLGTKYSEALKASVQGEDGRNQILTMGCYGIGVTRVVAAAIEQNFDERGIVWPDAIAPFQVAILPMNMHKSFRVQELAEKLYSELRAQGIEVLMDDRKERPGVMFADMELIGIPHTIVIGDRNLDNDDIEYKYRRSGEKSLIKTGDIVDYLVKAIKG</sequence>